<protein>
    <recommendedName>
        <fullName evidence="1">Exodeoxyribonuclease 7 large subunit</fullName>
        <ecNumber evidence="1">3.1.11.6</ecNumber>
    </recommendedName>
    <alternativeName>
        <fullName evidence="1">Exodeoxyribonuclease VII large subunit</fullName>
        <shortName evidence="1">Exonuclease VII large subunit</shortName>
    </alternativeName>
</protein>
<reference key="1">
    <citation type="journal article" date="2003" name="Proc. Natl. Acad. Sci. U.S.A.">
        <title>The complete genome sequence of Mycobacterium bovis.</title>
        <authorList>
            <person name="Garnier T."/>
            <person name="Eiglmeier K."/>
            <person name="Camus J.-C."/>
            <person name="Medina N."/>
            <person name="Mansoor H."/>
            <person name="Pryor M."/>
            <person name="Duthoy S."/>
            <person name="Grondin S."/>
            <person name="Lacroix C."/>
            <person name="Monsempe C."/>
            <person name="Simon S."/>
            <person name="Harris B."/>
            <person name="Atkin R."/>
            <person name="Doggett J."/>
            <person name="Mayes R."/>
            <person name="Keating L."/>
            <person name="Wheeler P.R."/>
            <person name="Parkhill J."/>
            <person name="Barrell B.G."/>
            <person name="Cole S.T."/>
            <person name="Gordon S.V."/>
            <person name="Hewinson R.G."/>
        </authorList>
    </citation>
    <scope>NUCLEOTIDE SEQUENCE [LARGE SCALE GENOMIC DNA]</scope>
    <source>
        <strain>ATCC BAA-935 / AF2122/97</strain>
    </source>
</reference>
<reference key="2">
    <citation type="journal article" date="2017" name="Genome Announc.">
        <title>Updated reference genome sequence and annotation of Mycobacterium bovis AF2122/97.</title>
        <authorList>
            <person name="Malone K.M."/>
            <person name="Farrell D."/>
            <person name="Stuber T.P."/>
            <person name="Schubert O.T."/>
            <person name="Aebersold R."/>
            <person name="Robbe-Austerman S."/>
            <person name="Gordon S.V."/>
        </authorList>
    </citation>
    <scope>NUCLEOTIDE SEQUENCE [LARGE SCALE GENOMIC DNA]</scope>
    <scope>GENOME REANNOTATION</scope>
    <source>
        <strain>ATCC BAA-935 / AF2122/97</strain>
    </source>
</reference>
<name>EX7L_MYCBO</name>
<feature type="chain" id="PRO_0000197861" description="Exodeoxyribonuclease 7 large subunit">
    <location>
        <begin position="1"/>
        <end position="415"/>
    </location>
</feature>
<comment type="function">
    <text evidence="1">Bidirectionally degrades single-stranded DNA into large acid-insoluble oligonucleotides, which are then degraded further into small acid-soluble oligonucleotides.</text>
</comment>
<comment type="catalytic activity">
    <reaction evidence="1">
        <text>Exonucleolytic cleavage in either 5'- to 3'- or 3'- to 5'-direction to yield nucleoside 5'-phosphates.</text>
        <dbReference type="EC" id="3.1.11.6"/>
    </reaction>
</comment>
<comment type="subunit">
    <text evidence="1">Heterooligomer composed of large and small subunits.</text>
</comment>
<comment type="subcellular location">
    <subcellularLocation>
        <location evidence="1">Cytoplasm</location>
    </subcellularLocation>
</comment>
<comment type="similarity">
    <text evidence="1">Belongs to the XseA family.</text>
</comment>
<keyword id="KW-0963">Cytoplasm</keyword>
<keyword id="KW-0269">Exonuclease</keyword>
<keyword id="KW-0378">Hydrolase</keyword>
<keyword id="KW-0540">Nuclease</keyword>
<keyword id="KW-1185">Reference proteome</keyword>
<accession>P67448</accession>
<accession>A0A1R3XXD3</accession>
<accession>O53456</accession>
<accession>X2BH15</accession>
<gene>
    <name evidence="1" type="primary">xseA</name>
    <name type="ordered locus">BQ2027_MB1138C</name>
</gene>
<dbReference type="EC" id="3.1.11.6" evidence="1"/>
<dbReference type="EMBL" id="LT708304">
    <property type="protein sequence ID" value="SIT99738.1"/>
    <property type="molecule type" value="Genomic_DNA"/>
</dbReference>
<dbReference type="RefSeq" id="NP_854794.1">
    <property type="nucleotide sequence ID" value="NC_002945.3"/>
</dbReference>
<dbReference type="RefSeq" id="WP_003405846.1">
    <property type="nucleotide sequence ID" value="NC_002945.4"/>
</dbReference>
<dbReference type="SMR" id="P67448"/>
<dbReference type="GeneID" id="45425082"/>
<dbReference type="KEGG" id="mbo:BQ2027_MB1138C"/>
<dbReference type="PATRIC" id="fig|233413.5.peg.1245"/>
<dbReference type="Proteomes" id="UP000001419">
    <property type="component" value="Chromosome"/>
</dbReference>
<dbReference type="GO" id="GO:0005737">
    <property type="term" value="C:cytoplasm"/>
    <property type="evidence" value="ECO:0007669"/>
    <property type="project" value="UniProtKB-SubCell"/>
</dbReference>
<dbReference type="GO" id="GO:0009318">
    <property type="term" value="C:exodeoxyribonuclease VII complex"/>
    <property type="evidence" value="ECO:0007669"/>
    <property type="project" value="InterPro"/>
</dbReference>
<dbReference type="GO" id="GO:0008855">
    <property type="term" value="F:exodeoxyribonuclease VII activity"/>
    <property type="evidence" value="ECO:0007669"/>
    <property type="project" value="UniProtKB-UniRule"/>
</dbReference>
<dbReference type="GO" id="GO:0003676">
    <property type="term" value="F:nucleic acid binding"/>
    <property type="evidence" value="ECO:0007669"/>
    <property type="project" value="InterPro"/>
</dbReference>
<dbReference type="GO" id="GO:0006308">
    <property type="term" value="P:DNA catabolic process"/>
    <property type="evidence" value="ECO:0007669"/>
    <property type="project" value="UniProtKB-UniRule"/>
</dbReference>
<dbReference type="CDD" id="cd04489">
    <property type="entry name" value="ExoVII_LU_OBF"/>
    <property type="match status" value="1"/>
</dbReference>
<dbReference type="HAMAP" id="MF_00378">
    <property type="entry name" value="Exonuc_7_L"/>
    <property type="match status" value="1"/>
</dbReference>
<dbReference type="InterPro" id="IPR003753">
    <property type="entry name" value="Exonuc_VII_L"/>
</dbReference>
<dbReference type="InterPro" id="IPR020579">
    <property type="entry name" value="Exonuc_VII_lsu_C"/>
</dbReference>
<dbReference type="InterPro" id="IPR025824">
    <property type="entry name" value="OB-fold_nuc-bd_dom"/>
</dbReference>
<dbReference type="NCBIfam" id="TIGR00237">
    <property type="entry name" value="xseA"/>
    <property type="match status" value="1"/>
</dbReference>
<dbReference type="PANTHER" id="PTHR30008">
    <property type="entry name" value="EXODEOXYRIBONUCLEASE 7 LARGE SUBUNIT"/>
    <property type="match status" value="1"/>
</dbReference>
<dbReference type="PANTHER" id="PTHR30008:SF0">
    <property type="entry name" value="EXODEOXYRIBONUCLEASE 7 LARGE SUBUNIT"/>
    <property type="match status" value="1"/>
</dbReference>
<dbReference type="Pfam" id="PF02601">
    <property type="entry name" value="Exonuc_VII_L"/>
    <property type="match status" value="1"/>
</dbReference>
<dbReference type="Pfam" id="PF13742">
    <property type="entry name" value="tRNA_anti_2"/>
    <property type="match status" value="1"/>
</dbReference>
<proteinExistence type="inferred from homology"/>
<sequence length="415" mass="44628">MTQNSAENPFPVRAVAIRVAGWIDKLGAVWVEGQLAQITMRPDAKTVFMVLRDPAADMSLTVTCSRDLVLSAPVKLAEGVQVVVCGKPSFYTGRGTFSLRLSEIRAVGIGELLARIDRLRRLLDAEGLFDPRLKRPIPYLPNMIGLITGRASAAERDVTTVASARWPAARFAVRNVAVQGPNAVGQIVEALRELDRDPDVDVIVLARGGGSVEDLLPFSDETLCRAIAACRTPVVSAVGHEPDNPLCDLVVDLRAATPTDAAKKVVPDTAAEQRLIDDLRRRSAQALRNWVSREQRAVAQLRSRPVLADPMTMVSVRAEEVHRARSTLRRNLTLMVAAETERIGHLAARLATLGPAATLARGYAIVQTVAQTGPEGGSEPQVLRSVHDAPEGTKLRVRVADGALAAVSEGQTNGL</sequence>
<evidence type="ECO:0000255" key="1">
    <source>
        <dbReference type="HAMAP-Rule" id="MF_00378"/>
    </source>
</evidence>
<organism>
    <name type="scientific">Mycobacterium bovis (strain ATCC BAA-935 / AF2122/97)</name>
    <dbReference type="NCBI Taxonomy" id="233413"/>
    <lineage>
        <taxon>Bacteria</taxon>
        <taxon>Bacillati</taxon>
        <taxon>Actinomycetota</taxon>
        <taxon>Actinomycetes</taxon>
        <taxon>Mycobacteriales</taxon>
        <taxon>Mycobacteriaceae</taxon>
        <taxon>Mycobacterium</taxon>
        <taxon>Mycobacterium tuberculosis complex</taxon>
    </lineage>
</organism>